<accession>Q89B22</accession>
<dbReference type="EMBL" id="AE016826">
    <property type="protein sequence ID" value="AAO26776.1"/>
    <property type="molecule type" value="Genomic_DNA"/>
</dbReference>
<dbReference type="RefSeq" id="WP_011091177.1">
    <property type="nucleotide sequence ID" value="NC_004545.1"/>
</dbReference>
<dbReference type="SMR" id="Q89B22"/>
<dbReference type="STRING" id="224915.bbp_033"/>
<dbReference type="KEGG" id="bab:bbp_033"/>
<dbReference type="eggNOG" id="COG0776">
    <property type="taxonomic scope" value="Bacteria"/>
</dbReference>
<dbReference type="HOGENOM" id="CLU_105066_3_1_6"/>
<dbReference type="OrthoDB" id="9799835at2"/>
<dbReference type="Proteomes" id="UP000000601">
    <property type="component" value="Chromosome"/>
</dbReference>
<dbReference type="GO" id="GO:0005829">
    <property type="term" value="C:cytosol"/>
    <property type="evidence" value="ECO:0007669"/>
    <property type="project" value="TreeGrafter"/>
</dbReference>
<dbReference type="GO" id="GO:0003677">
    <property type="term" value="F:DNA binding"/>
    <property type="evidence" value="ECO:0007669"/>
    <property type="project" value="UniProtKB-KW"/>
</dbReference>
<dbReference type="GO" id="GO:0030527">
    <property type="term" value="F:structural constituent of chromatin"/>
    <property type="evidence" value="ECO:0007669"/>
    <property type="project" value="InterPro"/>
</dbReference>
<dbReference type="GO" id="GO:0030261">
    <property type="term" value="P:chromosome condensation"/>
    <property type="evidence" value="ECO:0007669"/>
    <property type="project" value="UniProtKB-KW"/>
</dbReference>
<dbReference type="CDD" id="cd13831">
    <property type="entry name" value="HU"/>
    <property type="match status" value="1"/>
</dbReference>
<dbReference type="Gene3D" id="4.10.520.10">
    <property type="entry name" value="IHF-like DNA-binding proteins"/>
    <property type="match status" value="1"/>
</dbReference>
<dbReference type="InterPro" id="IPR000119">
    <property type="entry name" value="Hist_DNA-bd"/>
</dbReference>
<dbReference type="InterPro" id="IPR020816">
    <property type="entry name" value="Histone-like_DNA-bd_CS"/>
</dbReference>
<dbReference type="InterPro" id="IPR010992">
    <property type="entry name" value="IHF-like_DNA-bd_dom_sf"/>
</dbReference>
<dbReference type="PANTHER" id="PTHR33175">
    <property type="entry name" value="DNA-BINDING PROTEIN HU"/>
    <property type="match status" value="1"/>
</dbReference>
<dbReference type="PANTHER" id="PTHR33175:SF12">
    <property type="entry name" value="DNA-BINDING PROTEIN HU-ALPHA"/>
    <property type="match status" value="1"/>
</dbReference>
<dbReference type="Pfam" id="PF00216">
    <property type="entry name" value="Bac_DNA_binding"/>
    <property type="match status" value="1"/>
</dbReference>
<dbReference type="PRINTS" id="PR01727">
    <property type="entry name" value="DNABINDINGHU"/>
</dbReference>
<dbReference type="SMART" id="SM00411">
    <property type="entry name" value="BHL"/>
    <property type="match status" value="1"/>
</dbReference>
<dbReference type="SUPFAM" id="SSF47729">
    <property type="entry name" value="IHF-like DNA-binding proteins"/>
    <property type="match status" value="1"/>
</dbReference>
<dbReference type="PROSITE" id="PS00045">
    <property type="entry name" value="HISTONE_LIKE"/>
    <property type="match status" value="1"/>
</dbReference>
<gene>
    <name type="primary">hup</name>
    <name type="synonym">hupA</name>
    <name type="ordered locus">bbp_033</name>
</gene>
<sequence>MNKSELINIISKKSNLSKIQIKNILEITLTAIIQSLKDGNSVQLVGFGTFKVNNRAARIGRNPQTGQTIHISATKTPVFISGKTFKTAIKTI</sequence>
<comment type="function">
    <text evidence="1">Histone-like DNA-binding protein which is capable of wrapping DNA to stabilize it, and thus to prevent its denaturation under extreme environmental conditions.</text>
</comment>
<comment type="subunit">
    <text evidence="1">Homodimer.</text>
</comment>
<comment type="similarity">
    <text evidence="2">Belongs to the bacterial histone-like protein family.</text>
</comment>
<proteinExistence type="inferred from homology"/>
<protein>
    <recommendedName>
        <fullName>DNA-binding protein HU</fullName>
    </recommendedName>
</protein>
<organism>
    <name type="scientific">Buchnera aphidicola subsp. Baizongia pistaciae (strain Bp)</name>
    <dbReference type="NCBI Taxonomy" id="224915"/>
    <lineage>
        <taxon>Bacteria</taxon>
        <taxon>Pseudomonadati</taxon>
        <taxon>Pseudomonadota</taxon>
        <taxon>Gammaproteobacteria</taxon>
        <taxon>Enterobacterales</taxon>
        <taxon>Erwiniaceae</taxon>
        <taxon>Buchnera</taxon>
    </lineage>
</organism>
<name>DBH_BUCBP</name>
<reference key="1">
    <citation type="journal article" date="2003" name="Proc. Natl. Acad. Sci. U.S.A.">
        <title>Reductive genome evolution in Buchnera aphidicola.</title>
        <authorList>
            <person name="van Ham R.C.H.J."/>
            <person name="Kamerbeek J."/>
            <person name="Palacios C."/>
            <person name="Rausell C."/>
            <person name="Abascal F."/>
            <person name="Bastolla U."/>
            <person name="Fernandez J.M."/>
            <person name="Jimenez L."/>
            <person name="Postigo M."/>
            <person name="Silva F.J."/>
            <person name="Tamames J."/>
            <person name="Viguera E."/>
            <person name="Latorre A."/>
            <person name="Valencia A."/>
            <person name="Moran F."/>
            <person name="Moya A."/>
        </authorList>
    </citation>
    <scope>NUCLEOTIDE SEQUENCE [LARGE SCALE GENOMIC DNA]</scope>
    <source>
        <strain>Bp</strain>
    </source>
</reference>
<evidence type="ECO:0000250" key="1"/>
<evidence type="ECO:0000305" key="2"/>
<keyword id="KW-0226">DNA condensation</keyword>
<keyword id="KW-0238">DNA-binding</keyword>
<keyword id="KW-1185">Reference proteome</keyword>
<feature type="chain" id="PRO_0000104926" description="DNA-binding protein HU">
    <location>
        <begin position="1"/>
        <end position="92"/>
    </location>
</feature>